<reference key="1">
    <citation type="journal article" date="2010" name="J. Bacteriol.">
        <title>The genetic basis of laboratory adaptation in Caulobacter crescentus.</title>
        <authorList>
            <person name="Marks M.E."/>
            <person name="Castro-Rojas C.M."/>
            <person name="Teiling C."/>
            <person name="Du L."/>
            <person name="Kapatral V."/>
            <person name="Walunas T.L."/>
            <person name="Crosson S."/>
        </authorList>
    </citation>
    <scope>NUCLEOTIDE SEQUENCE [LARGE SCALE GENOMIC DNA]</scope>
    <source>
        <strain>NA1000 / CB15N</strain>
    </source>
</reference>
<evidence type="ECO:0000255" key="1">
    <source>
        <dbReference type="HAMAP-Rule" id="MF_00524"/>
    </source>
</evidence>
<comment type="catalytic activity">
    <reaction evidence="1">
        <text>D-glucose + ATP = D-glucose 6-phosphate + ADP + H(+)</text>
        <dbReference type="Rhea" id="RHEA:17825"/>
        <dbReference type="ChEBI" id="CHEBI:4167"/>
        <dbReference type="ChEBI" id="CHEBI:15378"/>
        <dbReference type="ChEBI" id="CHEBI:30616"/>
        <dbReference type="ChEBI" id="CHEBI:61548"/>
        <dbReference type="ChEBI" id="CHEBI:456216"/>
        <dbReference type="EC" id="2.7.1.2"/>
    </reaction>
</comment>
<comment type="subcellular location">
    <subcellularLocation>
        <location evidence="1">Cytoplasm</location>
    </subcellularLocation>
</comment>
<comment type="similarity">
    <text evidence="1">Belongs to the bacterial glucokinase family.</text>
</comment>
<gene>
    <name evidence="1" type="primary">glk</name>
    <name type="ordered locus">CCNA_02133</name>
</gene>
<organism>
    <name type="scientific">Caulobacter vibrioides (strain NA1000 / CB15N)</name>
    <name type="common">Caulobacter crescentus</name>
    <dbReference type="NCBI Taxonomy" id="565050"/>
    <lineage>
        <taxon>Bacteria</taxon>
        <taxon>Pseudomonadati</taxon>
        <taxon>Pseudomonadota</taxon>
        <taxon>Alphaproteobacteria</taxon>
        <taxon>Caulobacterales</taxon>
        <taxon>Caulobacteraceae</taxon>
        <taxon>Caulobacter</taxon>
    </lineage>
</organism>
<accession>B8GXA8</accession>
<dbReference type="EC" id="2.7.1.2" evidence="1"/>
<dbReference type="EMBL" id="CP001340">
    <property type="protein sequence ID" value="ACL95598.1"/>
    <property type="molecule type" value="Genomic_DNA"/>
</dbReference>
<dbReference type="RefSeq" id="WP_010919917.1">
    <property type="nucleotide sequence ID" value="NC_011916.1"/>
</dbReference>
<dbReference type="RefSeq" id="YP_002517506.1">
    <property type="nucleotide sequence ID" value="NC_011916.1"/>
</dbReference>
<dbReference type="SMR" id="B8GXA8"/>
<dbReference type="GeneID" id="7330439"/>
<dbReference type="KEGG" id="ccs:CCNA_02133"/>
<dbReference type="PATRIC" id="fig|565050.3.peg.2091"/>
<dbReference type="HOGENOM" id="CLU_042582_1_0_5"/>
<dbReference type="OrthoDB" id="9800595at2"/>
<dbReference type="PhylomeDB" id="B8GXA8"/>
<dbReference type="Proteomes" id="UP000001364">
    <property type="component" value="Chromosome"/>
</dbReference>
<dbReference type="GO" id="GO:0005829">
    <property type="term" value="C:cytosol"/>
    <property type="evidence" value="ECO:0007669"/>
    <property type="project" value="TreeGrafter"/>
</dbReference>
<dbReference type="GO" id="GO:0005524">
    <property type="term" value="F:ATP binding"/>
    <property type="evidence" value="ECO:0007669"/>
    <property type="project" value="UniProtKB-UniRule"/>
</dbReference>
<dbReference type="GO" id="GO:0005536">
    <property type="term" value="F:D-glucose binding"/>
    <property type="evidence" value="ECO:0007669"/>
    <property type="project" value="InterPro"/>
</dbReference>
<dbReference type="GO" id="GO:0004340">
    <property type="term" value="F:glucokinase activity"/>
    <property type="evidence" value="ECO:0007669"/>
    <property type="project" value="UniProtKB-UniRule"/>
</dbReference>
<dbReference type="GO" id="GO:0006096">
    <property type="term" value="P:glycolytic process"/>
    <property type="evidence" value="ECO:0007669"/>
    <property type="project" value="UniProtKB-UniRule"/>
</dbReference>
<dbReference type="CDD" id="cd24008">
    <property type="entry name" value="ASKHA_NBD_GLK"/>
    <property type="match status" value="1"/>
</dbReference>
<dbReference type="Gene3D" id="3.30.420.40">
    <property type="match status" value="1"/>
</dbReference>
<dbReference type="Gene3D" id="3.40.367.20">
    <property type="match status" value="1"/>
</dbReference>
<dbReference type="HAMAP" id="MF_00524">
    <property type="entry name" value="Glucokinase"/>
    <property type="match status" value="1"/>
</dbReference>
<dbReference type="InterPro" id="IPR043129">
    <property type="entry name" value="ATPase_NBD"/>
</dbReference>
<dbReference type="InterPro" id="IPR050201">
    <property type="entry name" value="Bacterial_glucokinase"/>
</dbReference>
<dbReference type="InterPro" id="IPR003836">
    <property type="entry name" value="Glucokinase"/>
</dbReference>
<dbReference type="NCBIfam" id="TIGR00749">
    <property type="entry name" value="glk"/>
    <property type="match status" value="1"/>
</dbReference>
<dbReference type="PANTHER" id="PTHR47690">
    <property type="entry name" value="GLUCOKINASE"/>
    <property type="match status" value="1"/>
</dbReference>
<dbReference type="PANTHER" id="PTHR47690:SF1">
    <property type="entry name" value="GLUCOKINASE"/>
    <property type="match status" value="1"/>
</dbReference>
<dbReference type="Pfam" id="PF02685">
    <property type="entry name" value="Glucokinase"/>
    <property type="match status" value="1"/>
</dbReference>
<dbReference type="SUPFAM" id="SSF53067">
    <property type="entry name" value="Actin-like ATPase domain"/>
    <property type="match status" value="1"/>
</dbReference>
<sequence length="331" mass="34714">MDGNHSGGLGLVGDIGGTNARFALVEFDGQDPRLIEPTAYRGEDYGTAEDAIEEYLRKVGVKHPDQAVVAVAGPIDHGQVHMTNLDWRISEDGLRRAGGFRNAKLINDFTAQALAAPRVGPKDLRQIGELPTSGEGDLAILGPGTGFGVAGLVRRHGQEIPLATEGGHVAFAPVDDVEIEVLRALTRRLDGGRVSVERILSGPGMEDLHVDLAAAEGRGVEALTAKQITERAVEGCADSLATVNRFCAILGSTAGDIALTLGARGGVFIAGGIAPRIIDILEKSPFRERFDSKGRLSGFTRSIPTHVILHPHTALIGAAVALTPEGRAAVS</sequence>
<name>GLK_CAUVN</name>
<feature type="chain" id="PRO_1000146249" description="Glucokinase">
    <location>
        <begin position="1"/>
        <end position="331"/>
    </location>
</feature>
<feature type="binding site" evidence="1">
    <location>
        <begin position="13"/>
        <end position="18"/>
    </location>
    <ligand>
        <name>ATP</name>
        <dbReference type="ChEBI" id="CHEBI:30616"/>
    </ligand>
</feature>
<protein>
    <recommendedName>
        <fullName evidence="1">Glucokinase</fullName>
        <ecNumber evidence="1">2.7.1.2</ecNumber>
    </recommendedName>
    <alternativeName>
        <fullName evidence="1">Glucose kinase</fullName>
    </alternativeName>
</protein>
<proteinExistence type="inferred from homology"/>
<keyword id="KW-0067">ATP-binding</keyword>
<keyword id="KW-0963">Cytoplasm</keyword>
<keyword id="KW-0324">Glycolysis</keyword>
<keyword id="KW-0418">Kinase</keyword>
<keyword id="KW-0547">Nucleotide-binding</keyword>
<keyword id="KW-1185">Reference proteome</keyword>
<keyword id="KW-0808">Transferase</keyword>